<evidence type="ECO:0000255" key="1"/>
<evidence type="ECO:0000255" key="2">
    <source>
        <dbReference type="PROSITE-ProRule" id="PRU00521"/>
    </source>
</evidence>
<evidence type="ECO:0000305" key="3"/>
<evidence type="ECO:0000312" key="4">
    <source>
        <dbReference type="MGI" id="MGI:2177523"/>
    </source>
</evidence>
<gene>
    <name evidence="4" type="primary">Or4c3d</name>
    <name evidence="4" type="synonym">Mor235-1</name>
    <name evidence="4" type="synonym">Olfr140</name>
    <name type="synonym">Olfr4</name>
</gene>
<comment type="function">
    <text evidence="3">Odorant receptor.</text>
</comment>
<comment type="subcellular location">
    <subcellularLocation>
        <location evidence="3">Cell membrane</location>
        <topology evidence="1">Multi-pass membrane protein</topology>
    </subcellularLocation>
</comment>
<comment type="similarity">
    <text evidence="2">Belongs to the G-protein coupled receptor 1 family.</text>
</comment>
<keyword id="KW-1003">Cell membrane</keyword>
<keyword id="KW-1015">Disulfide bond</keyword>
<keyword id="KW-0297">G-protein coupled receptor</keyword>
<keyword id="KW-0325">Glycoprotein</keyword>
<keyword id="KW-0472">Membrane</keyword>
<keyword id="KW-0552">Olfaction</keyword>
<keyword id="KW-0675">Receptor</keyword>
<keyword id="KW-1185">Reference proteome</keyword>
<keyword id="KW-0716">Sensory transduction</keyword>
<keyword id="KW-0807">Transducer</keyword>
<keyword id="KW-0812">Transmembrane</keyword>
<keyword id="KW-1133">Transmembrane helix</keyword>
<dbReference type="EMBL" id="AB030896">
    <property type="protein sequence ID" value="BAA86127.1"/>
    <property type="molecule type" value="Genomic_DNA"/>
</dbReference>
<dbReference type="EMBL" id="AY073623">
    <property type="protein sequence ID" value="AAL61286.1"/>
    <property type="molecule type" value="Genomic_DNA"/>
</dbReference>
<dbReference type="EMBL" id="AY318468">
    <property type="protein sequence ID" value="AAP71660.1"/>
    <property type="molecule type" value="Genomic_DNA"/>
</dbReference>
<dbReference type="EMBL" id="U28767">
    <property type="protein sequence ID" value="AAC52390.1"/>
    <property type="molecule type" value="Genomic_DNA"/>
</dbReference>
<dbReference type="CCDS" id="CCDS16405.1"/>
<dbReference type="RefSeq" id="NP_065261.1">
    <property type="nucleotide sequence ID" value="NM_020515.1"/>
</dbReference>
<dbReference type="SMR" id="Q60878"/>
<dbReference type="FunCoup" id="Q60878">
    <property type="interactions" value="1230"/>
</dbReference>
<dbReference type="STRING" id="10090.ENSMUSP00000150438"/>
<dbReference type="GlyCosmos" id="Q60878">
    <property type="glycosylation" value="1 site, No reported glycans"/>
</dbReference>
<dbReference type="GlyGen" id="Q60878">
    <property type="glycosylation" value="1 site"/>
</dbReference>
<dbReference type="PaxDb" id="10090-ENSMUSP00000107131"/>
<dbReference type="DNASU" id="57272"/>
<dbReference type="Ensembl" id="ENSMUST00000099757.2">
    <property type="protein sequence ID" value="ENSMUSP00000097346.2"/>
    <property type="gene ID" value="ENSMUSG00000075068.4"/>
</dbReference>
<dbReference type="Ensembl" id="ENSMUST00000111506.3">
    <property type="protein sequence ID" value="ENSMUSP00000107131.2"/>
    <property type="gene ID" value="ENSMUSG00000075068.4"/>
</dbReference>
<dbReference type="Ensembl" id="ENSMUST00000216475.2">
    <property type="protein sequence ID" value="ENSMUSP00000150438.2"/>
    <property type="gene ID" value="ENSMUSG00000075068.4"/>
</dbReference>
<dbReference type="GeneID" id="57272"/>
<dbReference type="KEGG" id="mmu:57272"/>
<dbReference type="UCSC" id="uc008ksl.1">
    <property type="organism name" value="mouse"/>
</dbReference>
<dbReference type="AGR" id="MGI:2177523"/>
<dbReference type="CTD" id="57272"/>
<dbReference type="MGI" id="MGI:2177523">
    <property type="gene designation" value="Or4c3d"/>
</dbReference>
<dbReference type="VEuPathDB" id="HostDB:ENSMUSG00000075068"/>
<dbReference type="eggNOG" id="ENOG502TK3X">
    <property type="taxonomic scope" value="Eukaryota"/>
</dbReference>
<dbReference type="GeneTree" id="ENSGT00940000163934"/>
<dbReference type="HOGENOM" id="CLU_012526_5_5_1"/>
<dbReference type="InParanoid" id="Q60878"/>
<dbReference type="OMA" id="CMTPKLV"/>
<dbReference type="OrthoDB" id="10017003at2759"/>
<dbReference type="PhylomeDB" id="Q60878"/>
<dbReference type="TreeFam" id="TF337350"/>
<dbReference type="BioGRID-ORCS" id="57272">
    <property type="hits" value="4 hits in 71 CRISPR screens"/>
</dbReference>
<dbReference type="PRO" id="PR:Q60878"/>
<dbReference type="Proteomes" id="UP000000589">
    <property type="component" value="Chromosome 2"/>
</dbReference>
<dbReference type="RNAct" id="Q60878">
    <property type="molecule type" value="protein"/>
</dbReference>
<dbReference type="Bgee" id="ENSMUSG00000075068">
    <property type="expression patterns" value="Expressed in septal olfactory organ and 4 other cell types or tissues"/>
</dbReference>
<dbReference type="GO" id="GO:0016020">
    <property type="term" value="C:membrane"/>
    <property type="evidence" value="ECO:0000247"/>
    <property type="project" value="MGI"/>
</dbReference>
<dbReference type="GO" id="GO:0005886">
    <property type="term" value="C:plasma membrane"/>
    <property type="evidence" value="ECO:0007669"/>
    <property type="project" value="UniProtKB-SubCell"/>
</dbReference>
<dbReference type="GO" id="GO:0004930">
    <property type="term" value="F:G protein-coupled receptor activity"/>
    <property type="evidence" value="ECO:0007669"/>
    <property type="project" value="UniProtKB-KW"/>
</dbReference>
<dbReference type="GO" id="GO:0004984">
    <property type="term" value="F:olfactory receptor activity"/>
    <property type="evidence" value="ECO:0000247"/>
    <property type="project" value="MGI"/>
</dbReference>
<dbReference type="GO" id="GO:0007186">
    <property type="term" value="P:G protein-coupled receptor signaling pathway"/>
    <property type="evidence" value="ECO:0000247"/>
    <property type="project" value="MGI"/>
</dbReference>
<dbReference type="GO" id="GO:0007608">
    <property type="term" value="P:sensory perception of smell"/>
    <property type="evidence" value="ECO:0000247"/>
    <property type="project" value="MGI"/>
</dbReference>
<dbReference type="CDD" id="cd15939">
    <property type="entry name" value="7tmA_OR4A-like"/>
    <property type="match status" value="1"/>
</dbReference>
<dbReference type="FunFam" id="1.20.1070.10:FF:000007">
    <property type="entry name" value="Olfactory receptor"/>
    <property type="match status" value="1"/>
</dbReference>
<dbReference type="Gene3D" id="1.20.1070.10">
    <property type="entry name" value="Rhodopsin 7-helix transmembrane proteins"/>
    <property type="match status" value="1"/>
</dbReference>
<dbReference type="InterPro" id="IPR000276">
    <property type="entry name" value="GPCR_Rhodpsn"/>
</dbReference>
<dbReference type="InterPro" id="IPR017452">
    <property type="entry name" value="GPCR_Rhodpsn_7TM"/>
</dbReference>
<dbReference type="InterPro" id="IPR000725">
    <property type="entry name" value="Olfact_rcpt"/>
</dbReference>
<dbReference type="InterPro" id="IPR050427">
    <property type="entry name" value="Olfactory_Receptors"/>
</dbReference>
<dbReference type="PANTHER" id="PTHR48002">
    <property type="entry name" value="OLFACTORY RECEPTOR"/>
    <property type="match status" value="1"/>
</dbReference>
<dbReference type="Pfam" id="PF13853">
    <property type="entry name" value="7tm_4"/>
    <property type="match status" value="1"/>
</dbReference>
<dbReference type="PRINTS" id="PR00237">
    <property type="entry name" value="GPCRRHODOPSN"/>
</dbReference>
<dbReference type="PRINTS" id="PR00245">
    <property type="entry name" value="OLFACTORYR"/>
</dbReference>
<dbReference type="SUPFAM" id="SSF81321">
    <property type="entry name" value="Family A G protein-coupled receptor-like"/>
    <property type="match status" value="1"/>
</dbReference>
<dbReference type="PROSITE" id="PS00237">
    <property type="entry name" value="G_PROTEIN_RECEP_F1_1"/>
    <property type="match status" value="1"/>
</dbReference>
<dbReference type="PROSITE" id="PS50262">
    <property type="entry name" value="G_PROTEIN_RECEP_F1_2"/>
    <property type="match status" value="1"/>
</dbReference>
<reference key="1">
    <citation type="journal article" date="1999" name="J. Neurosci.">
        <title>Olfactory neurons expressing closely linked and homologous odorant receptor genes tend to project their axons to neighboring glomeruli on the olfactory bulb.</title>
        <authorList>
            <person name="Tsuboi A."/>
            <person name="Yoshihara S."/>
            <person name="Yamazaki N."/>
            <person name="Kasai H."/>
            <person name="Asai-Tsuboi H."/>
            <person name="Komatsu M."/>
            <person name="Serizawa S."/>
            <person name="Ishii T."/>
            <person name="Matsuda Y."/>
            <person name="Nagawa F."/>
            <person name="Sakano H."/>
        </authorList>
    </citation>
    <scope>NUCLEOTIDE SEQUENCE [GENOMIC DNA]</scope>
    <source>
        <strain>129/SvJ</strain>
    </source>
</reference>
<reference key="2">
    <citation type="journal article" date="2002" name="Nat. Neurosci.">
        <title>The olfactory receptor gene superfamily of the mouse.</title>
        <authorList>
            <person name="Zhang X."/>
            <person name="Firestein S."/>
        </authorList>
    </citation>
    <scope>NUCLEOTIDE SEQUENCE [GENOMIC DNA]</scope>
</reference>
<reference key="3">
    <citation type="journal article" date="2002" name="Hum. Mol. Genet.">
        <title>Different evolutionary processes shaped the mouse and human olfactory receptor gene families.</title>
        <authorList>
            <person name="Young J.M."/>
            <person name="Friedman C."/>
            <person name="Williams E.M."/>
            <person name="Ross J.A."/>
            <person name="Tonnes-Priddy L."/>
            <person name="Trask B.J."/>
        </authorList>
    </citation>
    <scope>NUCLEOTIDE SEQUENCE [GENOMIC DNA]</scope>
</reference>
<reference key="4">
    <citation type="journal article" date="2002" name="Hum. Mol. Genet.">
        <authorList>
            <person name="Young J.M."/>
            <person name="Friedman C."/>
            <person name="Williams E.M."/>
            <person name="Ross J.A."/>
            <person name="Tonnes-Priddy L."/>
            <person name="Trask B.J."/>
        </authorList>
    </citation>
    <scope>ERRATUM OF PUBMED:11875048</scope>
</reference>
<reference key="5">
    <citation type="journal article" date="1996" name="Proc. Natl. Acad. Sci. U.S.A.">
        <title>The chromosomal distribution of mouse odorant receptor genes.</title>
        <authorList>
            <person name="Sullivan S.L."/>
            <person name="Adamson M.C."/>
            <person name="Ressler K.J."/>
            <person name="Kozak C.A."/>
            <person name="Buck L.B."/>
        </authorList>
    </citation>
    <scope>NUCLEOTIDE SEQUENCE [GENOMIC DNA] OF 126-236</scope>
    <source>
        <strain>C57BL/6J</strain>
    </source>
</reference>
<proteinExistence type="inferred from homology"/>
<accession>Q60878</accession>
<accession>Q9R0K1</accession>
<name>O4C3D_MOUSE</name>
<feature type="chain" id="PRO_0000150817" description="Olfactory receptor 4C3D">
    <location>
        <begin position="1"/>
        <end position="302"/>
    </location>
</feature>
<feature type="topological domain" description="Extracellular" evidence="1">
    <location>
        <begin position="1"/>
        <end position="24"/>
    </location>
</feature>
<feature type="transmembrane region" description="Helical; Name=1" evidence="1">
    <location>
        <begin position="25"/>
        <end position="45"/>
    </location>
</feature>
<feature type="topological domain" description="Cytoplasmic" evidence="1">
    <location>
        <position position="46"/>
    </location>
</feature>
<feature type="transmembrane region" description="Helical; Name=2" evidence="1">
    <location>
        <begin position="47"/>
        <end position="67"/>
    </location>
</feature>
<feature type="topological domain" description="Extracellular" evidence="1">
    <location>
        <begin position="68"/>
        <end position="95"/>
    </location>
</feature>
<feature type="transmembrane region" description="Helical; Name=3" evidence="1">
    <location>
        <begin position="96"/>
        <end position="116"/>
    </location>
</feature>
<feature type="topological domain" description="Cytoplasmic" evidence="1">
    <location>
        <begin position="117"/>
        <end position="139"/>
    </location>
</feature>
<feature type="transmembrane region" description="Helical; Name=4" evidence="1">
    <location>
        <begin position="140"/>
        <end position="160"/>
    </location>
</feature>
<feature type="topological domain" description="Extracellular" evidence="1">
    <location>
        <begin position="161"/>
        <end position="191"/>
    </location>
</feature>
<feature type="transmembrane region" description="Helical; Name=5" evidence="1">
    <location>
        <begin position="192"/>
        <end position="212"/>
    </location>
</feature>
<feature type="topological domain" description="Cytoplasmic" evidence="1">
    <location>
        <begin position="213"/>
        <end position="236"/>
    </location>
</feature>
<feature type="transmembrane region" description="Helical; Name=6" evidence="1">
    <location>
        <begin position="237"/>
        <end position="257"/>
    </location>
</feature>
<feature type="topological domain" description="Extracellular" evidence="1">
    <location>
        <begin position="258"/>
        <end position="266"/>
    </location>
</feature>
<feature type="transmembrane region" description="Helical; Name=7" evidence="1">
    <location>
        <begin position="267"/>
        <end position="287"/>
    </location>
</feature>
<feature type="topological domain" description="Cytoplasmic" evidence="1">
    <location>
        <begin position="288"/>
        <end position="302"/>
    </location>
</feature>
<feature type="glycosylation site" description="N-linked (GlcNAc...) asparagine" evidence="1">
    <location>
        <position position="6"/>
    </location>
</feature>
<feature type="disulfide bond" evidence="2">
    <location>
        <begin position="95"/>
        <end position="187"/>
    </location>
</feature>
<organism>
    <name type="scientific">Mus musculus</name>
    <name type="common">Mouse</name>
    <dbReference type="NCBI Taxonomy" id="10090"/>
    <lineage>
        <taxon>Eukaryota</taxon>
        <taxon>Metazoa</taxon>
        <taxon>Chordata</taxon>
        <taxon>Craniata</taxon>
        <taxon>Vertebrata</taxon>
        <taxon>Euteleostomi</taxon>
        <taxon>Mammalia</taxon>
        <taxon>Eutheria</taxon>
        <taxon>Euarchontoglires</taxon>
        <taxon>Glires</taxon>
        <taxon>Rodentia</taxon>
        <taxon>Myomorpha</taxon>
        <taxon>Muroidea</taxon>
        <taxon>Muridae</taxon>
        <taxon>Murinae</taxon>
        <taxon>Mus</taxon>
        <taxon>Mus</taxon>
    </lineage>
</organism>
<sequence>MDSPRNVTEFFMLGLSQNPQVQRMLFGLFLLVFLVSVGGNMLIIITITFSPTLGSPMYFFLSYLSFIDTCYSSCMTPKLIADSLHEGRAISFEGCLAQFFVAHLLGGTEIILLTVMAYDRYVAICKPLHYTTTMTRHVCIVLVAVAWLGGILHSTAQLFLVLQLPFCGPNVINHFVCDLYPLLELACTDTYVIGLLVVANSGVICLLNFLMLAASYIVILRTLRSHSAEGRRKALSTCGAHFTVVALFFVPCIFIYMRPSSTLSIDKIVAVFYCILTPMFNPLIYTLRNAEVKNAMKNLWRK</sequence>
<protein>
    <recommendedName>
        <fullName evidence="3">Olfactory receptor 4C3D</fullName>
    </recommendedName>
    <alternativeName>
        <fullName>Odorant receptor A16</fullName>
    </alternativeName>
    <alternativeName>
        <fullName>Olfactory receptor 140</fullName>
    </alternativeName>
    <alternativeName>
        <fullName>Olfactory receptor 235-1</fullName>
    </alternativeName>
    <alternativeName>
        <fullName>Olfactory receptor 4A</fullName>
    </alternativeName>
</protein>